<organism>
    <name type="scientific">Cutibacterium acnes (strain DSM 16379 / KPA171202)</name>
    <name type="common">Propionibacterium acnes</name>
    <dbReference type="NCBI Taxonomy" id="267747"/>
    <lineage>
        <taxon>Bacteria</taxon>
        <taxon>Bacillati</taxon>
        <taxon>Actinomycetota</taxon>
        <taxon>Actinomycetes</taxon>
        <taxon>Propionibacteriales</taxon>
        <taxon>Propionibacteriaceae</taxon>
        <taxon>Cutibacterium</taxon>
    </lineage>
</organism>
<comment type="function">
    <text evidence="1">Catalyzes the rearrangement of 1-deoxy-D-xylulose 5-phosphate (DXP) to produce the thiazole phosphate moiety of thiamine. Sulfur is provided by the thiocarboxylate moiety of the carrier protein ThiS. In vitro, sulfur can be provided by H(2)S.</text>
</comment>
<comment type="catalytic activity">
    <reaction evidence="1">
        <text>[ThiS sulfur-carrier protein]-C-terminal-Gly-aminoethanethioate + 2-iminoacetate + 1-deoxy-D-xylulose 5-phosphate = [ThiS sulfur-carrier protein]-C-terminal Gly-Gly + 2-[(2R,5Z)-2-carboxy-4-methylthiazol-5(2H)-ylidene]ethyl phosphate + 2 H2O + H(+)</text>
        <dbReference type="Rhea" id="RHEA:26297"/>
        <dbReference type="Rhea" id="RHEA-COMP:12909"/>
        <dbReference type="Rhea" id="RHEA-COMP:19908"/>
        <dbReference type="ChEBI" id="CHEBI:15377"/>
        <dbReference type="ChEBI" id="CHEBI:15378"/>
        <dbReference type="ChEBI" id="CHEBI:57792"/>
        <dbReference type="ChEBI" id="CHEBI:62899"/>
        <dbReference type="ChEBI" id="CHEBI:77846"/>
        <dbReference type="ChEBI" id="CHEBI:90778"/>
        <dbReference type="ChEBI" id="CHEBI:232372"/>
        <dbReference type="EC" id="2.8.1.10"/>
    </reaction>
</comment>
<comment type="pathway">
    <text evidence="1">Cofactor biosynthesis; thiamine diphosphate biosynthesis.</text>
</comment>
<comment type="subunit">
    <text evidence="1">Homotetramer. Forms heterodimers with either ThiH or ThiS.</text>
</comment>
<comment type="subcellular location">
    <subcellularLocation>
        <location evidence="1">Cytoplasm</location>
    </subcellularLocation>
</comment>
<comment type="similarity">
    <text evidence="1">Belongs to the ThiG family.</text>
</comment>
<keyword id="KW-0963">Cytoplasm</keyword>
<keyword id="KW-0704">Schiff base</keyword>
<keyword id="KW-0784">Thiamine biosynthesis</keyword>
<keyword id="KW-0808">Transferase</keyword>
<feature type="chain" id="PRO_0000162841" description="Thiazole synthase">
    <location>
        <begin position="1"/>
        <end position="277"/>
    </location>
</feature>
<feature type="active site" description="Schiff-base intermediate with DXP" evidence="1">
    <location>
        <position position="107"/>
    </location>
</feature>
<feature type="binding site" evidence="1">
    <location>
        <position position="168"/>
    </location>
    <ligand>
        <name>1-deoxy-D-xylulose 5-phosphate</name>
        <dbReference type="ChEBI" id="CHEBI:57792"/>
    </ligand>
</feature>
<feature type="binding site" evidence="1">
    <location>
        <begin position="194"/>
        <end position="195"/>
    </location>
    <ligand>
        <name>1-deoxy-D-xylulose 5-phosphate</name>
        <dbReference type="ChEBI" id="CHEBI:57792"/>
    </ligand>
</feature>
<feature type="binding site" evidence="1">
    <location>
        <begin position="216"/>
        <end position="217"/>
    </location>
    <ligand>
        <name>1-deoxy-D-xylulose 5-phosphate</name>
        <dbReference type="ChEBI" id="CHEBI:57792"/>
    </ligand>
</feature>
<proteinExistence type="inferred from homology"/>
<accession>Q6AAE4</accession>
<evidence type="ECO:0000255" key="1">
    <source>
        <dbReference type="HAMAP-Rule" id="MF_00443"/>
    </source>
</evidence>
<sequence>MSCDEKAATSSDEPLRIGGLRLTSRLIMGTGGSTSMDTLERALVASGTQLTTVAMRRFAAGPRQSVFEILQRHRITALPNTAGCYTARDAILTANLAREALDTNLVKLEVIADEDTLLPDPVELVNAAEQLVANDFVVLAYTNDDPAIAKRLEDLGCAAVMPAGAPIGTGLGILNPHNIELIVDRANVPVILDAGIGTASEATLAMELGCDAVLLASAVTRAHNPVGMAQAMKMAVVAGRMARTSGRIPRRRLARASSPFDGIITGRVRGPRENDSL</sequence>
<dbReference type="EC" id="2.8.1.10" evidence="1"/>
<dbReference type="EMBL" id="AE017283">
    <property type="protein sequence ID" value="AAT82272.1"/>
    <property type="molecule type" value="Genomic_DNA"/>
</dbReference>
<dbReference type="SMR" id="Q6AAE4"/>
<dbReference type="EnsemblBacteria" id="AAT82272">
    <property type="protein sequence ID" value="AAT82272"/>
    <property type="gene ID" value="PPA0519"/>
</dbReference>
<dbReference type="KEGG" id="pac:PPA0519"/>
<dbReference type="eggNOG" id="COG2022">
    <property type="taxonomic scope" value="Bacteria"/>
</dbReference>
<dbReference type="HOGENOM" id="CLU_062233_1_0_11"/>
<dbReference type="UniPathway" id="UPA00060"/>
<dbReference type="Proteomes" id="UP000000603">
    <property type="component" value="Chromosome"/>
</dbReference>
<dbReference type="GO" id="GO:0005737">
    <property type="term" value="C:cytoplasm"/>
    <property type="evidence" value="ECO:0007669"/>
    <property type="project" value="UniProtKB-SubCell"/>
</dbReference>
<dbReference type="GO" id="GO:1990107">
    <property type="term" value="F:thiazole synthase activity"/>
    <property type="evidence" value="ECO:0007669"/>
    <property type="project" value="UniProtKB-EC"/>
</dbReference>
<dbReference type="GO" id="GO:0009229">
    <property type="term" value="P:thiamine diphosphate biosynthetic process"/>
    <property type="evidence" value="ECO:0007669"/>
    <property type="project" value="UniProtKB-UniRule"/>
</dbReference>
<dbReference type="CDD" id="cd04728">
    <property type="entry name" value="ThiG"/>
    <property type="match status" value="1"/>
</dbReference>
<dbReference type="Gene3D" id="3.20.20.70">
    <property type="entry name" value="Aldolase class I"/>
    <property type="match status" value="1"/>
</dbReference>
<dbReference type="HAMAP" id="MF_00443">
    <property type="entry name" value="ThiG"/>
    <property type="match status" value="1"/>
</dbReference>
<dbReference type="InterPro" id="IPR013785">
    <property type="entry name" value="Aldolase_TIM"/>
</dbReference>
<dbReference type="InterPro" id="IPR033983">
    <property type="entry name" value="Thiazole_synthase_ThiG"/>
</dbReference>
<dbReference type="InterPro" id="IPR008867">
    <property type="entry name" value="ThiG"/>
</dbReference>
<dbReference type="PANTHER" id="PTHR34266">
    <property type="entry name" value="THIAZOLE SYNTHASE"/>
    <property type="match status" value="1"/>
</dbReference>
<dbReference type="PANTHER" id="PTHR34266:SF2">
    <property type="entry name" value="THIAZOLE SYNTHASE"/>
    <property type="match status" value="1"/>
</dbReference>
<dbReference type="Pfam" id="PF05690">
    <property type="entry name" value="ThiG"/>
    <property type="match status" value="1"/>
</dbReference>
<dbReference type="SUPFAM" id="SSF110399">
    <property type="entry name" value="ThiG-like"/>
    <property type="match status" value="1"/>
</dbReference>
<protein>
    <recommendedName>
        <fullName evidence="1">Thiazole synthase</fullName>
        <ecNumber evidence="1">2.8.1.10</ecNumber>
    </recommendedName>
</protein>
<reference key="1">
    <citation type="journal article" date="2004" name="Science">
        <title>The complete genome sequence of Propionibacterium acnes, a commensal of human skin.</title>
        <authorList>
            <person name="Brueggemann H."/>
            <person name="Henne A."/>
            <person name="Hoster F."/>
            <person name="Liesegang H."/>
            <person name="Wiezer A."/>
            <person name="Strittmatter A."/>
            <person name="Hujer S."/>
            <person name="Duerre P."/>
            <person name="Gottschalk G."/>
        </authorList>
    </citation>
    <scope>NUCLEOTIDE SEQUENCE [LARGE SCALE GENOMIC DNA]</scope>
    <source>
        <strain>DSM 16379 / KPA171202</strain>
    </source>
</reference>
<name>THIG_CUTAK</name>
<gene>
    <name evidence="1" type="primary">thiG</name>
    <name type="ordered locus">PPA0519</name>
</gene>